<proteinExistence type="inferred from homology"/>
<name>NUSB_TREPA</name>
<evidence type="ECO:0000255" key="1">
    <source>
        <dbReference type="HAMAP-Rule" id="MF_00073"/>
    </source>
</evidence>
<evidence type="ECO:0000305" key="2"/>
<dbReference type="EMBL" id="AE000520">
    <property type="protein sequence ID" value="AAC65965.1"/>
    <property type="molecule type" value="Genomic_DNA"/>
</dbReference>
<dbReference type="PIR" id="C71253">
    <property type="entry name" value="C71253"/>
</dbReference>
<dbReference type="RefSeq" id="WP_010882459.1">
    <property type="nucleotide sequence ID" value="NC_021490.2"/>
</dbReference>
<dbReference type="SMR" id="O83979"/>
<dbReference type="STRING" id="243276.TP_1015"/>
<dbReference type="EnsemblBacteria" id="AAC65965">
    <property type="protein sequence ID" value="AAC65965"/>
    <property type="gene ID" value="TP_1015"/>
</dbReference>
<dbReference type="GeneID" id="93876762"/>
<dbReference type="KEGG" id="tpa:TP_1015"/>
<dbReference type="KEGG" id="tpw:TPANIC_1015"/>
<dbReference type="eggNOG" id="COG0781">
    <property type="taxonomic scope" value="Bacteria"/>
</dbReference>
<dbReference type="HOGENOM" id="CLU_087843_3_0_12"/>
<dbReference type="OrthoDB" id="9811381at2"/>
<dbReference type="Proteomes" id="UP000000811">
    <property type="component" value="Chromosome"/>
</dbReference>
<dbReference type="GO" id="GO:0005829">
    <property type="term" value="C:cytosol"/>
    <property type="evidence" value="ECO:0007669"/>
    <property type="project" value="TreeGrafter"/>
</dbReference>
<dbReference type="GO" id="GO:0003723">
    <property type="term" value="F:RNA binding"/>
    <property type="evidence" value="ECO:0007669"/>
    <property type="project" value="UniProtKB-UniRule"/>
</dbReference>
<dbReference type="GO" id="GO:0006353">
    <property type="term" value="P:DNA-templated transcription termination"/>
    <property type="evidence" value="ECO:0007669"/>
    <property type="project" value="UniProtKB-UniRule"/>
</dbReference>
<dbReference type="GO" id="GO:0031564">
    <property type="term" value="P:transcription antitermination"/>
    <property type="evidence" value="ECO:0007669"/>
    <property type="project" value="UniProtKB-KW"/>
</dbReference>
<dbReference type="CDD" id="cd00619">
    <property type="entry name" value="Terminator_NusB"/>
    <property type="match status" value="1"/>
</dbReference>
<dbReference type="Gene3D" id="1.10.940.10">
    <property type="entry name" value="NusB-like"/>
    <property type="match status" value="1"/>
</dbReference>
<dbReference type="HAMAP" id="MF_00073">
    <property type="entry name" value="NusB"/>
    <property type="match status" value="1"/>
</dbReference>
<dbReference type="InterPro" id="IPR035926">
    <property type="entry name" value="NusB-like_sf"/>
</dbReference>
<dbReference type="InterPro" id="IPR011605">
    <property type="entry name" value="NusB_fam"/>
</dbReference>
<dbReference type="InterPro" id="IPR006027">
    <property type="entry name" value="NusB_RsmB_TIM44"/>
</dbReference>
<dbReference type="NCBIfam" id="TIGR01951">
    <property type="entry name" value="nusB"/>
    <property type="match status" value="1"/>
</dbReference>
<dbReference type="PANTHER" id="PTHR11078:SF3">
    <property type="entry name" value="ANTITERMINATION NUSB DOMAIN-CONTAINING PROTEIN"/>
    <property type="match status" value="1"/>
</dbReference>
<dbReference type="PANTHER" id="PTHR11078">
    <property type="entry name" value="N UTILIZATION SUBSTANCE PROTEIN B-RELATED"/>
    <property type="match status" value="1"/>
</dbReference>
<dbReference type="Pfam" id="PF01029">
    <property type="entry name" value="NusB"/>
    <property type="match status" value="1"/>
</dbReference>
<dbReference type="SUPFAM" id="SSF48013">
    <property type="entry name" value="NusB-like"/>
    <property type="match status" value="1"/>
</dbReference>
<reference key="1">
    <citation type="journal article" date="1998" name="Science">
        <title>Complete genome sequence of Treponema pallidum, the syphilis spirochete.</title>
        <authorList>
            <person name="Fraser C.M."/>
            <person name="Norris S.J."/>
            <person name="Weinstock G.M."/>
            <person name="White O."/>
            <person name="Sutton G.G."/>
            <person name="Dodson R.J."/>
            <person name="Gwinn M.L."/>
            <person name="Hickey E.K."/>
            <person name="Clayton R.A."/>
            <person name="Ketchum K.A."/>
            <person name="Sodergren E."/>
            <person name="Hardham J.M."/>
            <person name="McLeod M.P."/>
            <person name="Salzberg S.L."/>
            <person name="Peterson J.D."/>
            <person name="Khalak H.G."/>
            <person name="Richardson D.L."/>
            <person name="Howell J.K."/>
            <person name="Chidambaram M."/>
            <person name="Utterback T.R."/>
            <person name="McDonald L.A."/>
            <person name="Artiach P."/>
            <person name="Bowman C."/>
            <person name="Cotton M.D."/>
            <person name="Fujii C."/>
            <person name="Garland S.A."/>
            <person name="Hatch B."/>
            <person name="Horst K."/>
            <person name="Roberts K.M."/>
            <person name="Sandusky M."/>
            <person name="Weidman J.F."/>
            <person name="Smith H.O."/>
            <person name="Venter J.C."/>
        </authorList>
    </citation>
    <scope>NUCLEOTIDE SEQUENCE [LARGE SCALE GENOMIC DNA]</scope>
    <source>
        <strain>Nichols</strain>
    </source>
</reference>
<gene>
    <name evidence="1" type="primary">nusB</name>
    <name type="ordered locus">TP_1015</name>
</gene>
<comment type="function">
    <text evidence="1">Involved in transcription antitermination. Required for transcription of ribosomal RNA (rRNA) genes. Binds specifically to the boxA antiterminator sequence of the ribosomal RNA (rrn) operons.</text>
</comment>
<comment type="similarity">
    <text evidence="1 2">Belongs to the NusB family.</text>
</comment>
<accession>O83979</accession>
<protein>
    <recommendedName>
        <fullName evidence="1">Transcription antitermination protein NusB</fullName>
    </recommendedName>
    <alternativeName>
        <fullName evidence="1">Antitermination factor NusB</fullName>
    </alternativeName>
</protein>
<keyword id="KW-1185">Reference proteome</keyword>
<keyword id="KW-0694">RNA-binding</keyword>
<keyword id="KW-0804">Transcription</keyword>
<keyword id="KW-0889">Transcription antitermination</keyword>
<keyword id="KW-0805">Transcription regulation</keyword>
<organism>
    <name type="scientific">Treponema pallidum (strain Nichols)</name>
    <dbReference type="NCBI Taxonomy" id="243276"/>
    <lineage>
        <taxon>Bacteria</taxon>
        <taxon>Pseudomonadati</taxon>
        <taxon>Spirochaetota</taxon>
        <taxon>Spirochaetia</taxon>
        <taxon>Spirochaetales</taxon>
        <taxon>Treponemataceae</taxon>
        <taxon>Treponema</taxon>
    </lineage>
</organism>
<feature type="chain" id="PRO_0000176601" description="Transcription antitermination protein NusB">
    <location>
        <begin position="1"/>
        <end position="141"/>
    </location>
</feature>
<sequence length="141" mass="16014">MSEVFPKIGRRRARILAFQALFAWDAAGITPETLTQFTWLRRNPPPSTQDLGFSRLLFLGTLEHLREIDGCVSSRLEHWDFVRLNKVDKAILRLSAYSLLFQKDIPPVVVIHEAVSIARDFGTDDSFRFVNGVLDNIAKSA</sequence>